<evidence type="ECO:0000255" key="1"/>
<evidence type="ECO:0000255" key="2">
    <source>
        <dbReference type="PROSITE-ProRule" id="PRU00981"/>
    </source>
</evidence>
<evidence type="ECO:0000256" key="3">
    <source>
        <dbReference type="SAM" id="MobiDB-lite"/>
    </source>
</evidence>
<evidence type="ECO:0000303" key="4">
    <source>
    </source>
</evidence>
<evidence type="ECO:0000305" key="5">
    <source>
    </source>
</evidence>
<feature type="chain" id="PRO_0000442161" description="Psilocybin cluster transcription regulator">
    <location>
        <begin position="1"/>
        <end position="358"/>
    </location>
</feature>
<feature type="domain" description="bHLH" evidence="2">
    <location>
        <begin position="199"/>
        <end position="249"/>
    </location>
</feature>
<feature type="region of interest" description="Disordered" evidence="3">
    <location>
        <begin position="1"/>
        <end position="40"/>
    </location>
</feature>
<feature type="region of interest" description="Disordered" evidence="3">
    <location>
        <begin position="62"/>
        <end position="212"/>
    </location>
</feature>
<feature type="region of interest" description="Basic motif" evidence="2">
    <location>
        <begin position="199"/>
        <end position="212"/>
    </location>
</feature>
<feature type="region of interest" description="Helix-loop-helix motif" evidence="2">
    <location>
        <begin position="213"/>
        <end position="249"/>
    </location>
</feature>
<feature type="region of interest" description="Disordered" evidence="3">
    <location>
        <begin position="308"/>
        <end position="358"/>
    </location>
</feature>
<feature type="coiled-coil region" evidence="1">
    <location>
        <begin position="264"/>
        <end position="306"/>
    </location>
</feature>
<feature type="compositionally biased region" description="Pro residues" evidence="3">
    <location>
        <begin position="18"/>
        <end position="29"/>
    </location>
</feature>
<feature type="compositionally biased region" description="Polar residues" evidence="3">
    <location>
        <begin position="79"/>
        <end position="91"/>
    </location>
</feature>
<feature type="compositionally biased region" description="Low complexity" evidence="3">
    <location>
        <begin position="179"/>
        <end position="190"/>
    </location>
</feature>
<feature type="compositionally biased region" description="Basic and acidic residues" evidence="3">
    <location>
        <begin position="195"/>
        <end position="209"/>
    </location>
</feature>
<feature type="compositionally biased region" description="Low complexity" evidence="3">
    <location>
        <begin position="331"/>
        <end position="346"/>
    </location>
</feature>
<feature type="compositionally biased region" description="Basic and acidic residues" evidence="3">
    <location>
        <begin position="347"/>
        <end position="358"/>
    </location>
</feature>
<name>PSIR_PSICU</name>
<reference key="1">
    <citation type="journal article" date="2017" name="Angew. Chem. Int. Ed.">
        <title>Enzymatic synthesis of psilocybin.</title>
        <authorList>
            <person name="Fricke J."/>
            <person name="Blei F."/>
            <person name="Hoffmeister D."/>
        </authorList>
    </citation>
    <scope>NUCLEOTIDE SEQUENCE [GENOMIC DNA]</scope>
    <scope>IDENTIFICATION</scope>
    <scope>FUNCTION</scope>
</reference>
<dbReference type="EMBL" id="MF000990">
    <property type="protein sequence ID" value="ASU62243.1"/>
    <property type="molecule type" value="Genomic_RNA"/>
</dbReference>
<dbReference type="SMR" id="P0DPB0"/>
<dbReference type="OrthoDB" id="71302at2759"/>
<dbReference type="GO" id="GO:0005634">
    <property type="term" value="C:nucleus"/>
    <property type="evidence" value="ECO:0007669"/>
    <property type="project" value="UniProtKB-SubCell"/>
</dbReference>
<dbReference type="GO" id="GO:0003677">
    <property type="term" value="F:DNA binding"/>
    <property type="evidence" value="ECO:0007669"/>
    <property type="project" value="UniProtKB-KW"/>
</dbReference>
<dbReference type="GO" id="GO:0003700">
    <property type="term" value="F:DNA-binding transcription factor activity"/>
    <property type="evidence" value="ECO:0007669"/>
    <property type="project" value="InterPro"/>
</dbReference>
<dbReference type="GO" id="GO:0046983">
    <property type="term" value="F:protein dimerization activity"/>
    <property type="evidence" value="ECO:0007669"/>
    <property type="project" value="InterPro"/>
</dbReference>
<dbReference type="CDD" id="cd11398">
    <property type="entry name" value="bHLHzip_scCBP1"/>
    <property type="match status" value="1"/>
</dbReference>
<dbReference type="Gene3D" id="4.10.280.10">
    <property type="entry name" value="Helix-loop-helix DNA-binding domain"/>
    <property type="match status" value="1"/>
</dbReference>
<dbReference type="InterPro" id="IPR011598">
    <property type="entry name" value="bHLH_dom"/>
</dbReference>
<dbReference type="InterPro" id="IPR047206">
    <property type="entry name" value="bHLHzip_scCBP1-like"/>
</dbReference>
<dbReference type="InterPro" id="IPR036638">
    <property type="entry name" value="HLH_DNA-bd_sf"/>
</dbReference>
<dbReference type="PANTHER" id="PTHR47787">
    <property type="entry name" value="CENTROMERE-BINDING PROTEIN 1"/>
    <property type="match status" value="1"/>
</dbReference>
<dbReference type="PANTHER" id="PTHR47787:SF1">
    <property type="entry name" value="CENTROMERE-BINDING PROTEIN 1"/>
    <property type="match status" value="1"/>
</dbReference>
<dbReference type="Pfam" id="PF00010">
    <property type="entry name" value="HLH"/>
    <property type="match status" value="1"/>
</dbReference>
<dbReference type="SMART" id="SM00353">
    <property type="entry name" value="HLH"/>
    <property type="match status" value="1"/>
</dbReference>
<dbReference type="SUPFAM" id="SSF47459">
    <property type="entry name" value="HLH, helix-loop-helix DNA-binding domain"/>
    <property type="match status" value="1"/>
</dbReference>
<dbReference type="PROSITE" id="PS50888">
    <property type="entry name" value="BHLH"/>
    <property type="match status" value="1"/>
</dbReference>
<proteinExistence type="inferred from homology"/>
<organism>
    <name type="scientific">Psilocybe cubensis</name>
    <name type="common">Psychedelic mushroom</name>
    <name type="synonym">Stropharia cubensis</name>
    <dbReference type="NCBI Taxonomy" id="181762"/>
    <lineage>
        <taxon>Eukaryota</taxon>
        <taxon>Fungi</taxon>
        <taxon>Dikarya</taxon>
        <taxon>Basidiomycota</taxon>
        <taxon>Agaricomycotina</taxon>
        <taxon>Agaricomycetes</taxon>
        <taxon>Agaricomycetidae</taxon>
        <taxon>Agaricales</taxon>
        <taxon>Agaricineae</taxon>
        <taxon>Strophariaceae</taxon>
        <taxon>Psilocybe</taxon>
    </lineage>
</organism>
<accession>P0DPB0</accession>
<sequence>MAPATPATHDPALSHGAPPAPGAPAPANAPPNASGDIAGMQLSGLDQSQIMNLLRSLPGMFSGGKIPDQGQGNKEDAAQTLSNLAQAQPYGQQLPLHYQAGGPGGLPGINDPGPSTHPRGPPNLGQLSAVAMQAAPAPIQHPDQQTNRNDGEQAGNASASTSGKDGDNAEFVPPPAPAPTTGRRGGRSATMGSDEWSRQRKDNHKEVERRRRGNINEGINELGRIVPSGSGEKAKGAILSRAVQYIHHLKENEARNIEKWTLEKLLMDQAMGDLQAQLEEVKRLWEEERMARTRLEAELEVLRNMNGVNAGSAPASKDESAAGTKRRSTDGAEAATAATESSTANAEGERDGKRQRTE</sequence>
<keyword id="KW-0175">Coiled coil</keyword>
<keyword id="KW-0238">DNA-binding</keyword>
<keyword id="KW-0539">Nucleus</keyword>
<keyword id="KW-0804">Transcription</keyword>
<keyword id="KW-0805">Transcription regulation</keyword>
<comment type="function">
    <text evidence="5">Transcription factor that may regulate the expression of the gene cluster that mediates the biosynthesis of psilocybin, a psychotropic tryptamine-derived natural product (PubMed:28763571).</text>
</comment>
<comment type="subcellular location">
    <subcellularLocation>
        <location evidence="2">Nucleus</location>
    </subcellularLocation>
</comment>
<gene>
    <name evidence="4" type="primary">psiR</name>
</gene>
<protein>
    <recommendedName>
        <fullName evidence="4">Psilocybin cluster transcription regulator</fullName>
    </recommendedName>
</protein>